<sequence length="411" mass="43993">MPAPAATRRDRIEDELGAHNYQPLDVVLARGSGVWLYDTAGRRYLDCLSAYSAVNQGHCHPRILAAMVEQAQRLTLTSRAFRHDQLAPLYEDLARLTGAHKVLPMNSGAEAVETALKAVRKWGYEARGVPAGQAEIIVCANNFHGRTLGIVGFSTDPDARGGYGPFAPGFTVVPFGDFAALQAAVTPRTVAFLVEPIQGEAGVILPPPGYFRQVRKLCSERDIVLILDEIQTGLGRTGAFLAEAHEGIEADVTLIGKALSGGFYPVSAVLSNQAVLGIFQPGQHGSTFGGNPLACAVARAALRVLHDEGMIDNAREQGAYFMQRLRALPGPVREVRGRGLMLALELEPDAGPARAYCERLMARGMLVKDTHGQTLRLSPPLIVTREQIDWACAQLAHVLAHSAPGSSGGPS</sequence>
<evidence type="ECO:0000255" key="1">
    <source>
        <dbReference type="HAMAP-Rule" id="MF_01689"/>
    </source>
</evidence>
<evidence type="ECO:0000305" key="2"/>
<reference key="1">
    <citation type="journal article" date="2003" name="Nat. Genet.">
        <title>Comparative analysis of the genome sequences of Bordetella pertussis, Bordetella parapertussis and Bordetella bronchiseptica.</title>
        <authorList>
            <person name="Parkhill J."/>
            <person name="Sebaihia M."/>
            <person name="Preston A."/>
            <person name="Murphy L.D."/>
            <person name="Thomson N.R."/>
            <person name="Harris D.E."/>
            <person name="Holden M.T.G."/>
            <person name="Churcher C.M."/>
            <person name="Bentley S.D."/>
            <person name="Mungall K.L."/>
            <person name="Cerdeno-Tarraga A.-M."/>
            <person name="Temple L."/>
            <person name="James K.D."/>
            <person name="Harris B."/>
            <person name="Quail M.A."/>
            <person name="Achtman M."/>
            <person name="Atkin R."/>
            <person name="Baker S."/>
            <person name="Basham D."/>
            <person name="Bason N."/>
            <person name="Cherevach I."/>
            <person name="Chillingworth T."/>
            <person name="Collins M."/>
            <person name="Cronin A."/>
            <person name="Davis P."/>
            <person name="Doggett J."/>
            <person name="Feltwell T."/>
            <person name="Goble A."/>
            <person name="Hamlin N."/>
            <person name="Hauser H."/>
            <person name="Holroyd S."/>
            <person name="Jagels K."/>
            <person name="Leather S."/>
            <person name="Moule S."/>
            <person name="Norberczak H."/>
            <person name="O'Neil S."/>
            <person name="Ormond D."/>
            <person name="Price C."/>
            <person name="Rabbinowitsch E."/>
            <person name="Rutter S."/>
            <person name="Sanders M."/>
            <person name="Saunders D."/>
            <person name="Seeger K."/>
            <person name="Sharp S."/>
            <person name="Simmonds M."/>
            <person name="Skelton J."/>
            <person name="Squares R."/>
            <person name="Squares S."/>
            <person name="Stevens K."/>
            <person name="Unwin L."/>
            <person name="Whitehead S."/>
            <person name="Barrell B.G."/>
            <person name="Maskell D.J."/>
        </authorList>
    </citation>
    <scope>NUCLEOTIDE SEQUENCE [LARGE SCALE GENOMIC DNA]</scope>
    <source>
        <strain>12822 / ATCC BAA-587 / NCTC 13253</strain>
    </source>
</reference>
<protein>
    <recommendedName>
        <fullName evidence="1">Ornithine aminotransferase</fullName>
        <shortName evidence="1">OAT</shortName>
        <ecNumber evidence="1">2.6.1.13</ecNumber>
    </recommendedName>
    <alternativeName>
        <fullName evidence="1">Ornithine--oxo-acid aminotransferase</fullName>
    </alternativeName>
</protein>
<keyword id="KW-0028">Amino-acid biosynthesis</keyword>
<keyword id="KW-0032">Aminotransferase</keyword>
<keyword id="KW-0963">Cytoplasm</keyword>
<keyword id="KW-0641">Proline biosynthesis</keyword>
<keyword id="KW-0663">Pyridoxal phosphate</keyword>
<keyword id="KW-0808">Transferase</keyword>
<name>OAT_BORPA</name>
<proteinExistence type="inferred from homology"/>
<comment type="function">
    <text evidence="1">Catalyzes the interconversion of ornithine to glutamate semialdehyde.</text>
</comment>
<comment type="catalytic activity">
    <reaction evidence="1">
        <text>a 2-oxocarboxylate + L-ornithine = L-glutamate 5-semialdehyde + an L-alpha-amino acid</text>
        <dbReference type="Rhea" id="RHEA:13877"/>
        <dbReference type="ChEBI" id="CHEBI:35179"/>
        <dbReference type="ChEBI" id="CHEBI:46911"/>
        <dbReference type="ChEBI" id="CHEBI:58066"/>
        <dbReference type="ChEBI" id="CHEBI:59869"/>
        <dbReference type="EC" id="2.6.1.13"/>
    </reaction>
</comment>
<comment type="cofactor">
    <cofactor evidence="1">
        <name>pyridoxal 5'-phosphate</name>
        <dbReference type="ChEBI" id="CHEBI:597326"/>
    </cofactor>
</comment>
<comment type="pathway">
    <text evidence="1">Amino-acid biosynthesis; L-proline biosynthesis; L-glutamate 5-semialdehyde from L-ornithine: step 1/1.</text>
</comment>
<comment type="subcellular location">
    <subcellularLocation>
        <location evidence="1">Cytoplasm</location>
    </subcellularLocation>
</comment>
<comment type="similarity">
    <text evidence="1">Belongs to the class-III pyridoxal-phosphate-dependent aminotransferase family. OAT subfamily.</text>
</comment>
<comment type="sequence caution" evidence="2">
    <conflict type="erroneous initiation">
        <sequence resource="EMBL-CDS" id="CAE40157"/>
    </conflict>
</comment>
<accession>Q7W1E4</accession>
<gene>
    <name evidence="1" type="primary">rocD</name>
    <name type="ordered locus">BPP0748</name>
</gene>
<organism>
    <name type="scientific">Bordetella parapertussis (strain 12822 / ATCC BAA-587 / NCTC 13253)</name>
    <dbReference type="NCBI Taxonomy" id="257311"/>
    <lineage>
        <taxon>Bacteria</taxon>
        <taxon>Pseudomonadati</taxon>
        <taxon>Pseudomonadota</taxon>
        <taxon>Betaproteobacteria</taxon>
        <taxon>Burkholderiales</taxon>
        <taxon>Alcaligenaceae</taxon>
        <taxon>Bordetella</taxon>
    </lineage>
</organism>
<feature type="chain" id="PRO_0000120505" description="Ornithine aminotransferase">
    <location>
        <begin position="1"/>
        <end position="411"/>
    </location>
</feature>
<feature type="modified residue" description="N6-(pyridoxal phosphate)lysine" evidence="1">
    <location>
        <position position="257"/>
    </location>
</feature>
<dbReference type="EC" id="2.6.1.13" evidence="1"/>
<dbReference type="EMBL" id="BX640425">
    <property type="protein sequence ID" value="CAE40157.1"/>
    <property type="status" value="ALT_INIT"/>
    <property type="molecule type" value="Genomic_DNA"/>
</dbReference>
<dbReference type="SMR" id="Q7W1E4"/>
<dbReference type="KEGG" id="bpa:BPP0748"/>
<dbReference type="HOGENOM" id="CLU_016922_10_3_4"/>
<dbReference type="UniPathway" id="UPA00098">
    <property type="reaction ID" value="UER00358"/>
</dbReference>
<dbReference type="Proteomes" id="UP000001421">
    <property type="component" value="Chromosome"/>
</dbReference>
<dbReference type="GO" id="GO:0005737">
    <property type="term" value="C:cytoplasm"/>
    <property type="evidence" value="ECO:0007669"/>
    <property type="project" value="UniProtKB-SubCell"/>
</dbReference>
<dbReference type="GO" id="GO:0042802">
    <property type="term" value="F:identical protein binding"/>
    <property type="evidence" value="ECO:0007669"/>
    <property type="project" value="TreeGrafter"/>
</dbReference>
<dbReference type="GO" id="GO:0004587">
    <property type="term" value="F:ornithine aminotransferase activity"/>
    <property type="evidence" value="ECO:0007669"/>
    <property type="project" value="UniProtKB-UniRule"/>
</dbReference>
<dbReference type="GO" id="GO:0030170">
    <property type="term" value="F:pyridoxal phosphate binding"/>
    <property type="evidence" value="ECO:0007669"/>
    <property type="project" value="UniProtKB-UniRule"/>
</dbReference>
<dbReference type="GO" id="GO:0055129">
    <property type="term" value="P:L-proline biosynthetic process"/>
    <property type="evidence" value="ECO:0007669"/>
    <property type="project" value="UniProtKB-UniRule"/>
</dbReference>
<dbReference type="CDD" id="cd00610">
    <property type="entry name" value="OAT_like"/>
    <property type="match status" value="1"/>
</dbReference>
<dbReference type="FunFam" id="3.40.640.10:FF:000011">
    <property type="entry name" value="Ornithine aminotransferase"/>
    <property type="match status" value="1"/>
</dbReference>
<dbReference type="Gene3D" id="3.90.1150.10">
    <property type="entry name" value="Aspartate Aminotransferase, domain 1"/>
    <property type="match status" value="1"/>
</dbReference>
<dbReference type="Gene3D" id="3.40.640.10">
    <property type="entry name" value="Type I PLP-dependent aspartate aminotransferase-like (Major domain)"/>
    <property type="match status" value="1"/>
</dbReference>
<dbReference type="HAMAP" id="MF_01689">
    <property type="entry name" value="Ornith_aminotrans_3"/>
    <property type="match status" value="1"/>
</dbReference>
<dbReference type="InterPro" id="IPR005814">
    <property type="entry name" value="Aminotrans_3"/>
</dbReference>
<dbReference type="InterPro" id="IPR049704">
    <property type="entry name" value="Aminotrans_3_PPA_site"/>
</dbReference>
<dbReference type="InterPro" id="IPR050103">
    <property type="entry name" value="Class-III_PLP-dep_AT"/>
</dbReference>
<dbReference type="InterPro" id="IPR010164">
    <property type="entry name" value="Orn_aminotrans"/>
</dbReference>
<dbReference type="InterPro" id="IPR034757">
    <property type="entry name" value="Ornith_aminotrans_bact"/>
</dbReference>
<dbReference type="InterPro" id="IPR015424">
    <property type="entry name" value="PyrdxlP-dep_Trfase"/>
</dbReference>
<dbReference type="InterPro" id="IPR015421">
    <property type="entry name" value="PyrdxlP-dep_Trfase_major"/>
</dbReference>
<dbReference type="InterPro" id="IPR015422">
    <property type="entry name" value="PyrdxlP-dep_Trfase_small"/>
</dbReference>
<dbReference type="NCBIfam" id="TIGR01885">
    <property type="entry name" value="Orn_aminotrans"/>
    <property type="match status" value="1"/>
</dbReference>
<dbReference type="PANTHER" id="PTHR11986">
    <property type="entry name" value="AMINOTRANSFERASE CLASS III"/>
    <property type="match status" value="1"/>
</dbReference>
<dbReference type="PANTHER" id="PTHR11986:SF18">
    <property type="entry name" value="ORNITHINE AMINOTRANSFERASE, MITOCHONDRIAL"/>
    <property type="match status" value="1"/>
</dbReference>
<dbReference type="Pfam" id="PF00202">
    <property type="entry name" value="Aminotran_3"/>
    <property type="match status" value="1"/>
</dbReference>
<dbReference type="PIRSF" id="PIRSF000521">
    <property type="entry name" value="Transaminase_4ab_Lys_Orn"/>
    <property type="match status" value="1"/>
</dbReference>
<dbReference type="SUPFAM" id="SSF53383">
    <property type="entry name" value="PLP-dependent transferases"/>
    <property type="match status" value="1"/>
</dbReference>
<dbReference type="PROSITE" id="PS00600">
    <property type="entry name" value="AA_TRANSFER_CLASS_3"/>
    <property type="match status" value="1"/>
</dbReference>